<organism>
    <name type="scientific">Photobacterium profundum (strain SS9)</name>
    <dbReference type="NCBI Taxonomy" id="298386"/>
    <lineage>
        <taxon>Bacteria</taxon>
        <taxon>Pseudomonadati</taxon>
        <taxon>Pseudomonadota</taxon>
        <taxon>Gammaproteobacteria</taxon>
        <taxon>Vibrionales</taxon>
        <taxon>Vibrionaceae</taxon>
        <taxon>Photobacterium</taxon>
    </lineage>
</organism>
<comment type="subcellular location">
    <subcellularLocation>
        <location evidence="1">Cytoplasm</location>
    </subcellularLocation>
</comment>
<comment type="similarity">
    <text evidence="1">Belongs to the methyltransferase superfamily. TrmY family.</text>
</comment>
<accession>Q6LRY9</accession>
<name>TRMYL_PHOPR</name>
<feature type="chain" id="PRO_1000129782" description="Putative pseudouridine methyltransferase">
    <location>
        <begin position="1"/>
        <end position="198"/>
    </location>
</feature>
<feature type="binding site" evidence="1">
    <location>
        <position position="132"/>
    </location>
    <ligand>
        <name>S-adenosyl-L-methionine</name>
        <dbReference type="ChEBI" id="CHEBI:59789"/>
    </ligand>
</feature>
<feature type="binding site" evidence="1">
    <location>
        <position position="186"/>
    </location>
    <ligand>
        <name>S-adenosyl-L-methionine</name>
        <dbReference type="ChEBI" id="CHEBI:59789"/>
    </ligand>
</feature>
<sequence length="198" mass="22288">MRAFVLRARSAPTNSQLLLESVGQEAHTEILAHTLMNAIFVAQSHRDDVIVHLVLESTQDFSRTISFTSSEITNVGGFHEQALLTKIARALDLSQGMTKEQERKVEPGITVRTVSFEKLVQELAEDYQLFMMDKKGTNIREQEFEGNPCFLLTDHIPMPKKSFNSLKRLGATKISLGPKMLFASQCVVLIHNELDINM</sequence>
<keyword id="KW-0963">Cytoplasm</keyword>
<keyword id="KW-0489">Methyltransferase</keyword>
<keyword id="KW-1185">Reference proteome</keyword>
<keyword id="KW-0949">S-adenosyl-L-methionine</keyword>
<keyword id="KW-0808">Transferase</keyword>
<protein>
    <recommendedName>
        <fullName evidence="1">Putative pseudouridine methyltransferase</fullName>
        <ecNumber evidence="1">2.1.1.-</ecNumber>
    </recommendedName>
</protein>
<proteinExistence type="inferred from homology"/>
<dbReference type="EC" id="2.1.1.-" evidence="1"/>
<dbReference type="EMBL" id="CR378667">
    <property type="protein sequence ID" value="CAG19937.1"/>
    <property type="molecule type" value="Genomic_DNA"/>
</dbReference>
<dbReference type="RefSeq" id="WP_011218258.1">
    <property type="nucleotide sequence ID" value="NC_006370.1"/>
</dbReference>
<dbReference type="SMR" id="Q6LRY9"/>
<dbReference type="STRING" id="298386.PBPRA1526"/>
<dbReference type="KEGG" id="ppr:PBPRA1526"/>
<dbReference type="eggNOG" id="COG1901">
    <property type="taxonomic scope" value="Bacteria"/>
</dbReference>
<dbReference type="HOGENOM" id="CLU_107018_0_0_6"/>
<dbReference type="Proteomes" id="UP000000593">
    <property type="component" value="Chromosome 1"/>
</dbReference>
<dbReference type="GO" id="GO:0005737">
    <property type="term" value="C:cytoplasm"/>
    <property type="evidence" value="ECO:0007669"/>
    <property type="project" value="UniProtKB-SubCell"/>
</dbReference>
<dbReference type="GO" id="GO:0008757">
    <property type="term" value="F:S-adenosylmethionine-dependent methyltransferase activity"/>
    <property type="evidence" value="ECO:0007669"/>
    <property type="project" value="UniProtKB-UniRule"/>
</dbReference>
<dbReference type="GO" id="GO:0008175">
    <property type="term" value="F:tRNA methyltransferase activity"/>
    <property type="evidence" value="ECO:0007669"/>
    <property type="project" value="InterPro"/>
</dbReference>
<dbReference type="GO" id="GO:0030488">
    <property type="term" value="P:tRNA methylation"/>
    <property type="evidence" value="ECO:0007669"/>
    <property type="project" value="TreeGrafter"/>
</dbReference>
<dbReference type="CDD" id="cd18087">
    <property type="entry name" value="TrmY-like"/>
    <property type="match status" value="1"/>
</dbReference>
<dbReference type="Gene3D" id="3.40.1280.10">
    <property type="match status" value="1"/>
</dbReference>
<dbReference type="HAMAP" id="MF_00587">
    <property type="entry name" value="tRNA_methyltr_TrmY"/>
    <property type="match status" value="1"/>
</dbReference>
<dbReference type="InterPro" id="IPR029028">
    <property type="entry name" value="Alpha/beta_knot_MTases"/>
</dbReference>
<dbReference type="InterPro" id="IPR007158">
    <property type="entry name" value="TrmY"/>
</dbReference>
<dbReference type="InterPro" id="IPR029026">
    <property type="entry name" value="tRNA_m1G_MTases_N"/>
</dbReference>
<dbReference type="NCBIfam" id="NF002560">
    <property type="entry name" value="PRK02135.1"/>
    <property type="match status" value="1"/>
</dbReference>
<dbReference type="PANTHER" id="PTHR40703">
    <property type="entry name" value="TRNA (PSEUDOURIDINE(54)-N(1))-METHYLTRANSFERASE"/>
    <property type="match status" value="1"/>
</dbReference>
<dbReference type="PANTHER" id="PTHR40703:SF1">
    <property type="entry name" value="TRNA (PSEUDOURIDINE(54)-N(1))-METHYLTRANSFERASE"/>
    <property type="match status" value="1"/>
</dbReference>
<dbReference type="Pfam" id="PF04013">
    <property type="entry name" value="Methyltrn_RNA_2"/>
    <property type="match status" value="1"/>
</dbReference>
<dbReference type="SUPFAM" id="SSF75217">
    <property type="entry name" value="alpha/beta knot"/>
    <property type="match status" value="1"/>
</dbReference>
<gene>
    <name type="ordered locus">PBPRA1526</name>
</gene>
<evidence type="ECO:0000255" key="1">
    <source>
        <dbReference type="HAMAP-Rule" id="MF_00587"/>
    </source>
</evidence>
<reference key="1">
    <citation type="journal article" date="2005" name="Science">
        <title>Life at depth: Photobacterium profundum genome sequence and expression analysis.</title>
        <authorList>
            <person name="Vezzi A."/>
            <person name="Campanaro S."/>
            <person name="D'Angelo M."/>
            <person name="Simonato F."/>
            <person name="Vitulo N."/>
            <person name="Lauro F.M."/>
            <person name="Cestaro A."/>
            <person name="Malacrida G."/>
            <person name="Simionati B."/>
            <person name="Cannata N."/>
            <person name="Romualdi C."/>
            <person name="Bartlett D.H."/>
            <person name="Valle G."/>
        </authorList>
    </citation>
    <scope>NUCLEOTIDE SEQUENCE [LARGE SCALE GENOMIC DNA]</scope>
    <source>
        <strain>ATCC BAA-1253 / SS9</strain>
    </source>
</reference>